<organism>
    <name type="scientific">Rotavirus A (strain RVA/SA11-Both/G3P5B[2])</name>
    <name type="common">RV-A</name>
    <name type="synonym">Simian Agent 11 (strain Both)</name>
    <dbReference type="NCBI Taxonomy" id="37137"/>
    <lineage>
        <taxon>Viruses</taxon>
        <taxon>Riboviria</taxon>
        <taxon>Orthornavirae</taxon>
        <taxon>Duplornaviricota</taxon>
        <taxon>Resentoviricetes</taxon>
        <taxon>Reovirales</taxon>
        <taxon>Sedoreoviridae</taxon>
        <taxon>Rotavirus</taxon>
        <taxon>Rotavirus A</taxon>
    </lineage>
</organism>
<sequence length="326" mass="37120">MYGIEYTTVLTFLISIILLNYILKSLTRIMDCIIYRLLFIIVILSPFLRAQNYGINLPITGSMDTAYANSTQEETFLTSTLCLYYPTEAATEINDNSWKDTLSQLFLTKGWPTGSVYFKEYTNIASFSVDPQLYCDYNVVLMKYDATLQLDMSELADLILNEWLCNPMDITLYYYQQTDEANKWISMGSSCTIKVCPLNTQTLGIGCLTTDATTFEEVATAEKLVITDVVDGVNHKLDVTTATCTIRNCKKLGPRENVAVIQVGGSDILDITADPTTAPQTERMMRINWKKWWQVFYTVVDYVDQIIQVMSKRSRSLNSAAFYYRV</sequence>
<proteinExistence type="evidence at protein level"/>
<comment type="function">
    <text evidence="1">Calcium-binding protein that interacts with rotavirus cell receptors once the initial attachment by VP4 has been achieved (By similarity). Rotavirus attachment and entry into the host cell probably involves multiple sequential contacts between the outer capsid proteins VP4 and VP7, and the cell receptors (PubMed:12941907). Following entry into the host cell, low intracellular or intravesicular Ca(2+) concentration probably causes the calcium-stabilized VP7 trimers to dissociate from the virion. This step is probably necessary for the membrane-disrupting entry step and the release of VP4, which is locked onto the virion by VP7 (By similarity).</text>
</comment>
<comment type="subunit">
    <text evidence="1 2">Homotrimer; disulfide-linked. 2 Ca(2+) ions bound at each subunit interface in the trimer hold the trimer together. Interacts with the intermediate capsid protein VP6 (By similarity). Interacts with the outer capsid protein VP5* (By similarity). Interacts with host integrin heterodimer ITGAX/ITGB2 (PubMed:12941907). Interacts with host integrin heterodimer ITGA5/ITGB3 (PubMed:12941907).</text>
</comment>
<comment type="subcellular location">
    <subcellularLocation>
        <location evidence="1">Virion</location>
    </subcellularLocation>
    <subcellularLocation>
        <location evidence="1">Host endoplasmic reticulum lumen</location>
    </subcellularLocation>
    <text evidence="1">The outer layer contains 780 copies of VP7, grouped as 260 trimers. Immature double-layered particles assembled in the cytoplasm bud across the membrane of the endoplasmic reticulum, acquiring during this process a transient lipid membrane that is modified with the ER resident viral glycoproteins NSP4 and VP7; these enveloped particles also contain VP4. As the particles move towards the interior of the ER cisternae, the transient lipid membrane and the non-structural protein NSP4 are lost, while the virus surface proteins VP4 and VP7 rearrange to form the outermost virus protein layer, yielding mature infectious triple-layered particles.</text>
</comment>
<comment type="alternative products">
    <event type="alternative initiation"/>
    <isoform>
        <id>P03533-1</id>
        <name>1</name>
        <sequence type="displayed"/>
    </isoform>
    <isoform>
        <id>P03533-2</id>
        <name>2</name>
        <sequence type="described" ref="VSP_036750"/>
    </isoform>
</comment>
<comment type="PTM">
    <text evidence="1 5">N-glycosylated.</text>
</comment>
<comment type="PTM">
    <text evidence="1 4">The N-terminus is blocked possibly by pyroglutamic acid.</text>
</comment>
<comment type="miscellaneous">
    <text evidence="1 3">Some rotavirus strains are neuraminidase-sensitive and require sialic acid to attach to the cell surface. Some rotavirus strains are integrin-dependent. Some rotavirus strains depend on ganglioside for their entry into the host cell. Hsp70 also seems to be involved in the entry of some strains.</text>
</comment>
<comment type="miscellaneous">
    <text evidence="1">In group A rotaviruses, VP7 defines the G serotype.</text>
</comment>
<comment type="miscellaneous">
    <molecule>Isoform 2</molecule>
    <text evidence="4">Produced by alternative initiation at Met-30 of isoform 1.</text>
</comment>
<comment type="similarity">
    <text evidence="1">Belongs to the rotavirus VP7 family.</text>
</comment>
<name>VP7_ROTS1</name>
<dbReference type="EMBL" id="V01190">
    <property type="protein sequence ID" value="CAA24510.1"/>
    <property type="molecule type" value="Unassigned_RNA"/>
</dbReference>
<dbReference type="EMBL" id="V01546">
    <property type="protein sequence ID" value="CAA24788.1"/>
    <property type="molecule type" value="Genomic_RNA"/>
</dbReference>
<dbReference type="EMBL" id="K02028">
    <property type="protein sequence ID" value="AAA47307.1"/>
    <property type="molecule type" value="Genomic_RNA"/>
</dbReference>
<dbReference type="PIR" id="A04135">
    <property type="entry name" value="VGXR1S"/>
</dbReference>
<dbReference type="SMR" id="P03533"/>
<dbReference type="iPTMnet" id="P03533"/>
<dbReference type="Proteomes" id="UP000007180">
    <property type="component" value="Genome"/>
</dbReference>
<dbReference type="GO" id="GO:0044166">
    <property type="term" value="C:host cell endoplasmic reticulum lumen"/>
    <property type="evidence" value="ECO:0007669"/>
    <property type="project" value="UniProtKB-SubCell"/>
</dbReference>
<dbReference type="GO" id="GO:0039621">
    <property type="term" value="C:T=13 icosahedral viral capsid"/>
    <property type="evidence" value="ECO:0007669"/>
    <property type="project" value="UniProtKB-UniRule"/>
</dbReference>
<dbReference type="GO" id="GO:0039624">
    <property type="term" value="C:viral outer capsid"/>
    <property type="evidence" value="ECO:0007669"/>
    <property type="project" value="UniProtKB-UniRule"/>
</dbReference>
<dbReference type="GO" id="GO:0046872">
    <property type="term" value="F:metal ion binding"/>
    <property type="evidence" value="ECO:0007669"/>
    <property type="project" value="UniProtKB-KW"/>
</dbReference>
<dbReference type="GO" id="GO:0046813">
    <property type="term" value="P:receptor-mediated virion attachment to host cell"/>
    <property type="evidence" value="ECO:0000314"/>
    <property type="project" value="UniProtKB"/>
</dbReference>
<dbReference type="FunFam" id="2.60.120.800:FF:000001">
    <property type="entry name" value="Outer capsid glycoprotein VP7"/>
    <property type="match status" value="1"/>
</dbReference>
<dbReference type="Gene3D" id="3.40.50.11130">
    <property type="entry name" value="Glycoprotein VP7, domain 1"/>
    <property type="match status" value="1"/>
</dbReference>
<dbReference type="Gene3D" id="2.60.120.800">
    <property type="entry name" value="Rotavirus outer-layer protein VP7, domain 2"/>
    <property type="match status" value="1"/>
</dbReference>
<dbReference type="HAMAP" id="MF_04130">
    <property type="entry name" value="Rota_VP7"/>
    <property type="match status" value="1"/>
</dbReference>
<dbReference type="HAMAP" id="MF_04131">
    <property type="entry name" value="Rota_VP7_A"/>
    <property type="match status" value="1"/>
</dbReference>
<dbReference type="InterPro" id="IPR001963">
    <property type="entry name" value="VP7"/>
</dbReference>
<dbReference type="InterPro" id="IPR042207">
    <property type="entry name" value="VP7_1"/>
</dbReference>
<dbReference type="InterPro" id="IPR042210">
    <property type="entry name" value="VP7_2"/>
</dbReference>
<dbReference type="Pfam" id="PF00434">
    <property type="entry name" value="VP7"/>
    <property type="match status" value="1"/>
</dbReference>
<keyword id="KW-0024">Alternative initiation</keyword>
<keyword id="KW-0106">Calcium</keyword>
<keyword id="KW-0167">Capsid protein</keyword>
<keyword id="KW-1015">Disulfide bond</keyword>
<keyword id="KW-0325">Glycoprotein</keyword>
<keyword id="KW-1038">Host endoplasmic reticulum</keyword>
<keyword id="KW-0945">Host-virus interaction</keyword>
<keyword id="KW-0479">Metal-binding</keyword>
<keyword id="KW-1152">Outer capsid protein</keyword>
<keyword id="KW-1185">Reference proteome</keyword>
<keyword id="KW-0732">Signal</keyword>
<keyword id="KW-1146">T=13 icosahedral capsid protein</keyword>
<keyword id="KW-0946">Virion</keyword>
<feature type="signal peptide" evidence="1 4">
    <location>
        <begin position="1"/>
        <end position="50"/>
    </location>
</feature>
<feature type="chain" id="PRO_0000149621" description="Outer capsid glycoprotein VP7" evidence="1">
    <location>
        <begin position="51"/>
        <end position="326"/>
    </location>
</feature>
<feature type="region of interest" description="CNP motif; interaction with ITGAV/ITGB3" evidence="1">
    <location>
        <begin position="165"/>
        <end position="167"/>
    </location>
</feature>
<feature type="region of interest" description="LVD motif; interaction with ITGA4/ITGB1 heterodimer" evidence="1">
    <location>
        <begin position="237"/>
        <end position="239"/>
    </location>
</feature>
<feature type="region of interest" description="GPR motif; interaction with ITGAX/ITGB2" evidence="1">
    <location>
        <begin position="253"/>
        <end position="255"/>
    </location>
</feature>
<feature type="binding site" evidence="1">
    <location>
        <position position="95"/>
    </location>
    <ligand>
        <name>Ca(2+)</name>
        <dbReference type="ChEBI" id="CHEBI:29108"/>
        <label>1</label>
    </ligand>
</feature>
<feature type="binding site" evidence="1">
    <location>
        <position position="177"/>
    </location>
    <ligand>
        <name>Ca(2+)</name>
        <dbReference type="ChEBI" id="CHEBI:29108"/>
        <label>2</label>
    </ligand>
</feature>
<feature type="binding site" evidence="1">
    <location>
        <position position="206"/>
    </location>
    <ligand>
        <name>Ca(2+)</name>
        <dbReference type="ChEBI" id="CHEBI:29108"/>
        <label>1</label>
    </ligand>
</feature>
<feature type="binding site" evidence="1">
    <location>
        <position position="214"/>
    </location>
    <ligand>
        <name>Ca(2+)</name>
        <dbReference type="ChEBI" id="CHEBI:29108"/>
        <label>1</label>
    </ligand>
</feature>
<feature type="binding site" evidence="1">
    <location>
        <position position="216"/>
    </location>
    <ligand>
        <name>Ca(2+)</name>
        <dbReference type="ChEBI" id="CHEBI:29108"/>
        <label>1</label>
    </ligand>
</feature>
<feature type="binding site" evidence="1">
    <location>
        <position position="228"/>
    </location>
    <ligand>
        <name>Ca(2+)</name>
        <dbReference type="ChEBI" id="CHEBI:29108"/>
        <label>2</label>
    </ligand>
</feature>
<feature type="binding site" evidence="1">
    <location>
        <position position="229"/>
    </location>
    <ligand>
        <name>Ca(2+)</name>
        <dbReference type="ChEBI" id="CHEBI:29108"/>
        <label>2</label>
    </ligand>
</feature>
<feature type="binding site" evidence="1">
    <location>
        <position position="231"/>
    </location>
    <ligand>
        <name>Ca(2+)</name>
        <dbReference type="ChEBI" id="CHEBI:29108"/>
        <label>2</label>
    </ligand>
</feature>
<feature type="binding site" evidence="1">
    <location>
        <position position="301"/>
    </location>
    <ligand>
        <name>Ca(2+)</name>
        <dbReference type="ChEBI" id="CHEBI:29108"/>
        <label>2</label>
    </ligand>
</feature>
<feature type="glycosylation site" description="N-linked (GlcNAc...) asparagine; by host" evidence="7">
    <location>
        <position position="69"/>
    </location>
</feature>
<feature type="disulfide bond" evidence="1">
    <location>
        <begin position="82"/>
        <end position="135"/>
    </location>
</feature>
<feature type="disulfide bond" evidence="1">
    <location>
        <begin position="165"/>
        <end position="249"/>
    </location>
</feature>
<feature type="disulfide bond" evidence="1">
    <location>
        <begin position="191"/>
        <end position="244"/>
    </location>
</feature>
<feature type="disulfide bond" evidence="1">
    <location>
        <begin position="196"/>
        <end position="207"/>
    </location>
</feature>
<feature type="splice variant" id="VSP_036750" description="In isoform 2." evidence="6">
    <location>
        <begin position="1"/>
        <end position="29"/>
    </location>
</feature>
<feature type="mutagenesis site" description="Isoform 2 is no longer synthesized." evidence="4">
    <original>M</original>
    <variation>L</variation>
    <location>
        <position position="30"/>
    </location>
</feature>
<feature type="mutagenesis site" description="Complete loss of signal processing." evidence="4">
    <original>A</original>
    <variation>V</variation>
    <location>
        <position position="50"/>
    </location>
</feature>
<feature type="sequence conflict" description="In Ref. 2; AAA47307." evidence="6" ref="2">
    <original>I</original>
    <variation>T</variation>
    <location>
        <position position="16"/>
    </location>
</feature>
<feature type="sequence conflict" description="In Ref. 2; AAA47307." evidence="6" ref="2">
    <original>C</original>
    <variation>F</variation>
    <location>
        <position position="32"/>
    </location>
</feature>
<feature type="sequence conflict" description="In Ref. 2; AAA47307." evidence="6" ref="2">
    <original>L</original>
    <variation>F</variation>
    <location>
        <position position="37"/>
    </location>
</feature>
<feature type="sequence conflict" description="In Ref. 2; AAA47307." evidence="6" ref="2">
    <original>T</original>
    <variation>A</variation>
    <location>
        <position position="60"/>
    </location>
</feature>
<feature type="sequence conflict" description="In Ref. 2; AAA47307." evidence="6" ref="2">
    <original>T</original>
    <variation>P</variation>
    <location>
        <position position="75"/>
    </location>
</feature>
<feature type="sequence conflict" description="In Ref. 2; AAA47307." evidence="6" ref="2">
    <original>G</original>
    <variation>E</variation>
    <location>
        <position position="114"/>
    </location>
</feature>
<feature type="sequence conflict" description="In Ref. 2; AAA47307." evidence="6" ref="2">
    <original>A</original>
    <variation>P</variation>
    <location>
        <position position="219"/>
    </location>
</feature>
<feature type="sequence conflict" description="In Ref. 1; CAA24788." evidence="6" ref="1">
    <original>L</original>
    <variation>H</variation>
    <location>
        <position position="269"/>
    </location>
</feature>
<organismHost>
    <name type="scientific">Macaca mulatta</name>
    <name type="common">Rhesus macaque</name>
    <dbReference type="NCBI Taxonomy" id="9544"/>
</organismHost>
<accession>P03533</accession>
<protein>
    <recommendedName>
        <fullName evidence="1">Outer capsid glycoprotein VP7</fullName>
    </recommendedName>
</protein>
<evidence type="ECO:0000255" key="1">
    <source>
        <dbReference type="HAMAP-Rule" id="MF_04131"/>
    </source>
</evidence>
<evidence type="ECO:0000269" key="2">
    <source>
    </source>
</evidence>
<evidence type="ECO:0000269" key="3">
    <source>
    </source>
</evidence>
<evidence type="ECO:0000269" key="4">
    <source>
    </source>
</evidence>
<evidence type="ECO:0000269" key="5">
    <source>
    </source>
</evidence>
<evidence type="ECO:0000305" key="6"/>
<evidence type="ECO:0000305" key="7">
    <source>
    </source>
</evidence>
<reference key="1">
    <citation type="journal article" date="1983" name="Proc. Natl. Acad. Sci. U.S.A.">
        <title>Serotype-specific glycoprotein of simian 11 rotavirus: coding assignment and gene sequence.</title>
        <authorList>
            <person name="Both G.W."/>
            <person name="Mattick J.S."/>
            <person name="Bellamy A.R."/>
        </authorList>
    </citation>
    <scope>NUCLEOTIDE SEQUENCE [GENOMIC RNA]</scope>
</reference>
<reference key="2">
    <citation type="journal article" date="1984" name="J. Virol.">
        <title>Primary structure of the neutralization antigen of simian rotavirus SA11 as deduced from cDNA sequence.</title>
        <authorList>
            <person name="Arias C.F."/>
            <person name="Lopez S."/>
            <person name="Bell J.R."/>
            <person name="Strauss J.H."/>
        </authorList>
    </citation>
    <scope>NUCLEOTIDE SEQUENCE [GENOMIC RNA]</scope>
</reference>
<reference key="3">
    <citation type="journal article" date="1985" name="J. Cell Biol.">
        <title>Processing of the rough endoplasmic reticulum membrane glycoproteins of rotavirus SA11.</title>
        <authorList>
            <person name="Kabcenell A.K."/>
            <person name="Atkinson P.H."/>
        </authorList>
    </citation>
    <scope>GLYCOSYLATION AT ASN-69</scope>
</reference>
<reference key="4">
    <citation type="journal article" date="1987" name="J. Cell Biol.">
        <title>Processing of rotavirus glycoprotein VP7: implications for the retention of the protein in the endoplasmic reticulum.</title>
        <authorList>
            <person name="Stirzaker S.C."/>
            <person name="Whitfeld P.L."/>
            <person name="Christie D.L."/>
            <person name="Bellamy A.R."/>
            <person name="Both G.W."/>
        </authorList>
    </citation>
    <scope>SIGNAL SEQUENCE CLEAVAGE SITE</scope>
    <scope>ALTERNATIVE INITIATION</scope>
    <scope>MUTAGENESIS OF MET-30 AND ALA-50</scope>
</reference>
<reference key="5">
    <citation type="journal article" date="2003" name="J. Virol.">
        <title>Integrin-using rotaviruses bind alpha2beta1 integrin alpha2 I domain via VP4 DGE sequence and recognize alphaXbeta2 and alphaVbeta3 by using VP7 during cell entry.</title>
        <authorList>
            <person name="Graham K.L."/>
            <person name="Halasz P."/>
            <person name="Tan Y."/>
            <person name="Hewish M.J."/>
            <person name="Takada Y."/>
            <person name="Mackow E.R."/>
            <person name="Robinson M.K."/>
            <person name="Coulson B.S."/>
        </authorList>
    </citation>
    <scope>INTERACTION WITH HUMAN INTEGRIN HETERODIMER ITGAX/ITGB2</scope>
    <scope>INTERACTION WITH INTEGRIN HETERODIMER ITGA5/ITGB3</scope>
    <scope>FUNCTION</scope>
</reference>
<reference key="6">
    <citation type="journal article" date="2004" name="Trends Microbiol.">
        <title>Multistep entry of rotavirus into cells: a Versaillesque dance.</title>
        <authorList>
            <person name="Lopez S."/>
            <person name="Arias C.F."/>
        </authorList>
    </citation>
    <scope>REVIEW</scope>
</reference>